<evidence type="ECO:0000255" key="1">
    <source>
        <dbReference type="HAMAP-Rule" id="MF_00050"/>
    </source>
</evidence>
<sequence length="283" mass="30423">MAEITASLVKELRERTGAGMMDCKKALTEANGDIELAIENMRKSGAIKAAKKAGNVAADGVIKTKIDGNYGIILEVNCQTDFVAKDAGFQAFADKVLDAAVAGKITDVEVLKAQFEEERVALVAKIGENINIRRVAALEGDVLGSYQHGARIGVLVAAKGADEELVKHIAMHVAASKPEFIKPEDVSAEVVEKEYQVQLDIAMQSGKPKEIAEKMVEGRMKKFTGEVSLTGQPFVMEPSKTVGQLLKEHNAEVTGFIRFEVGEGIEKVETDFAAEVAAMSKQS</sequence>
<accession>B7M1B0</accession>
<feature type="chain" id="PRO_1000116731" description="Elongation factor Ts">
    <location>
        <begin position="1"/>
        <end position="283"/>
    </location>
</feature>
<feature type="region of interest" description="Involved in Mg(2+) ion dislocation from EF-Tu" evidence="1">
    <location>
        <begin position="80"/>
        <end position="83"/>
    </location>
</feature>
<proteinExistence type="inferred from homology"/>
<reference key="1">
    <citation type="journal article" date="2009" name="PLoS Genet.">
        <title>Organised genome dynamics in the Escherichia coli species results in highly diverse adaptive paths.</title>
        <authorList>
            <person name="Touchon M."/>
            <person name="Hoede C."/>
            <person name="Tenaillon O."/>
            <person name="Barbe V."/>
            <person name="Baeriswyl S."/>
            <person name="Bidet P."/>
            <person name="Bingen E."/>
            <person name="Bonacorsi S."/>
            <person name="Bouchier C."/>
            <person name="Bouvet O."/>
            <person name="Calteau A."/>
            <person name="Chiapello H."/>
            <person name="Clermont O."/>
            <person name="Cruveiller S."/>
            <person name="Danchin A."/>
            <person name="Diard M."/>
            <person name="Dossat C."/>
            <person name="Karoui M.E."/>
            <person name="Frapy E."/>
            <person name="Garry L."/>
            <person name="Ghigo J.M."/>
            <person name="Gilles A.M."/>
            <person name="Johnson J."/>
            <person name="Le Bouguenec C."/>
            <person name="Lescat M."/>
            <person name="Mangenot S."/>
            <person name="Martinez-Jehanne V."/>
            <person name="Matic I."/>
            <person name="Nassif X."/>
            <person name="Oztas S."/>
            <person name="Petit M.A."/>
            <person name="Pichon C."/>
            <person name="Rouy Z."/>
            <person name="Ruf C.S."/>
            <person name="Schneider D."/>
            <person name="Tourret J."/>
            <person name="Vacherie B."/>
            <person name="Vallenet D."/>
            <person name="Medigue C."/>
            <person name="Rocha E.P.C."/>
            <person name="Denamur E."/>
        </authorList>
    </citation>
    <scope>NUCLEOTIDE SEQUENCE [LARGE SCALE GENOMIC DNA]</scope>
    <source>
        <strain>IAI1</strain>
    </source>
</reference>
<organism>
    <name type="scientific">Escherichia coli O8 (strain IAI1)</name>
    <dbReference type="NCBI Taxonomy" id="585034"/>
    <lineage>
        <taxon>Bacteria</taxon>
        <taxon>Pseudomonadati</taxon>
        <taxon>Pseudomonadota</taxon>
        <taxon>Gammaproteobacteria</taxon>
        <taxon>Enterobacterales</taxon>
        <taxon>Enterobacteriaceae</taxon>
        <taxon>Escherichia</taxon>
    </lineage>
</organism>
<name>EFTS_ECO8A</name>
<gene>
    <name evidence="1" type="primary">tsf</name>
    <name type="ordered locus">ECIAI1_0168</name>
</gene>
<comment type="function">
    <text evidence="1">Associates with the EF-Tu.GDP complex and induces the exchange of GDP to GTP. It remains bound to the aminoacyl-tRNA.EF-Tu.GTP complex up to the GTP hydrolysis stage on the ribosome.</text>
</comment>
<comment type="subcellular location">
    <subcellularLocation>
        <location evidence="1">Cytoplasm</location>
    </subcellularLocation>
</comment>
<comment type="similarity">
    <text evidence="1">Belongs to the EF-Ts family.</text>
</comment>
<protein>
    <recommendedName>
        <fullName evidence="1">Elongation factor Ts</fullName>
        <shortName evidence="1">EF-Ts</shortName>
    </recommendedName>
</protein>
<keyword id="KW-0963">Cytoplasm</keyword>
<keyword id="KW-0251">Elongation factor</keyword>
<keyword id="KW-0648">Protein biosynthesis</keyword>
<dbReference type="EMBL" id="CU928160">
    <property type="protein sequence ID" value="CAQ97056.1"/>
    <property type="molecule type" value="Genomic_DNA"/>
</dbReference>
<dbReference type="RefSeq" id="WP_000818114.1">
    <property type="nucleotide sequence ID" value="NC_011741.1"/>
</dbReference>
<dbReference type="SMR" id="B7M1B0"/>
<dbReference type="GeneID" id="93777255"/>
<dbReference type="KEGG" id="ecr:ECIAI1_0168"/>
<dbReference type="HOGENOM" id="CLU_047155_0_2_6"/>
<dbReference type="GO" id="GO:0005737">
    <property type="term" value="C:cytoplasm"/>
    <property type="evidence" value="ECO:0007669"/>
    <property type="project" value="UniProtKB-SubCell"/>
</dbReference>
<dbReference type="GO" id="GO:0003746">
    <property type="term" value="F:translation elongation factor activity"/>
    <property type="evidence" value="ECO:0007669"/>
    <property type="project" value="UniProtKB-UniRule"/>
</dbReference>
<dbReference type="CDD" id="cd14275">
    <property type="entry name" value="UBA_EF-Ts"/>
    <property type="match status" value="1"/>
</dbReference>
<dbReference type="FunFam" id="1.10.286.20:FF:000001">
    <property type="entry name" value="Elongation factor Ts"/>
    <property type="match status" value="1"/>
</dbReference>
<dbReference type="FunFam" id="1.10.8.10:FF:000001">
    <property type="entry name" value="Elongation factor Ts"/>
    <property type="match status" value="1"/>
</dbReference>
<dbReference type="FunFam" id="3.30.479.20:FF:000001">
    <property type="entry name" value="Elongation factor Ts"/>
    <property type="match status" value="1"/>
</dbReference>
<dbReference type="Gene3D" id="1.10.286.20">
    <property type="match status" value="1"/>
</dbReference>
<dbReference type="Gene3D" id="1.10.8.10">
    <property type="entry name" value="DNA helicase RuvA subunit, C-terminal domain"/>
    <property type="match status" value="1"/>
</dbReference>
<dbReference type="Gene3D" id="3.30.479.20">
    <property type="entry name" value="Elongation factor Ts, dimerisation domain"/>
    <property type="match status" value="2"/>
</dbReference>
<dbReference type="HAMAP" id="MF_00050">
    <property type="entry name" value="EF_Ts"/>
    <property type="match status" value="1"/>
</dbReference>
<dbReference type="InterPro" id="IPR036402">
    <property type="entry name" value="EF-Ts_dimer_sf"/>
</dbReference>
<dbReference type="InterPro" id="IPR001816">
    <property type="entry name" value="Transl_elong_EFTs/EF1B"/>
</dbReference>
<dbReference type="InterPro" id="IPR014039">
    <property type="entry name" value="Transl_elong_EFTs/EF1B_dimer"/>
</dbReference>
<dbReference type="InterPro" id="IPR018101">
    <property type="entry name" value="Transl_elong_Ts_CS"/>
</dbReference>
<dbReference type="InterPro" id="IPR009060">
    <property type="entry name" value="UBA-like_sf"/>
</dbReference>
<dbReference type="NCBIfam" id="TIGR00116">
    <property type="entry name" value="tsf"/>
    <property type="match status" value="1"/>
</dbReference>
<dbReference type="PANTHER" id="PTHR11741">
    <property type="entry name" value="ELONGATION FACTOR TS"/>
    <property type="match status" value="1"/>
</dbReference>
<dbReference type="PANTHER" id="PTHR11741:SF0">
    <property type="entry name" value="ELONGATION FACTOR TS, MITOCHONDRIAL"/>
    <property type="match status" value="1"/>
</dbReference>
<dbReference type="Pfam" id="PF00889">
    <property type="entry name" value="EF_TS"/>
    <property type="match status" value="1"/>
</dbReference>
<dbReference type="SUPFAM" id="SSF54713">
    <property type="entry name" value="Elongation factor Ts (EF-Ts), dimerisation domain"/>
    <property type="match status" value="2"/>
</dbReference>
<dbReference type="SUPFAM" id="SSF46934">
    <property type="entry name" value="UBA-like"/>
    <property type="match status" value="1"/>
</dbReference>
<dbReference type="PROSITE" id="PS01126">
    <property type="entry name" value="EF_TS_1"/>
    <property type="match status" value="1"/>
</dbReference>
<dbReference type="PROSITE" id="PS01127">
    <property type="entry name" value="EF_TS_2"/>
    <property type="match status" value="1"/>
</dbReference>